<gene>
    <name type="primary">GRP</name>
</gene>
<feature type="signal peptide" evidence="2">
    <location>
        <begin position="1"/>
        <end position="23"/>
    </location>
</feature>
<feature type="peptide" id="PRO_0000003042" description="Gastrin-releasing peptide" evidence="2">
    <location>
        <begin position="24"/>
        <end position="50"/>
    </location>
</feature>
<feature type="peptide" id="PRO_0000003043" description="Neuromedin-C" evidence="5">
    <location>
        <begin position="41"/>
        <end position="50"/>
    </location>
</feature>
<feature type="propeptide" id="PRO_0000003044" evidence="2">
    <location>
        <begin position="54"/>
        <end position="134"/>
    </location>
</feature>
<feature type="region of interest" description="Disordered" evidence="7">
    <location>
        <begin position="98"/>
        <end position="134"/>
    </location>
</feature>
<feature type="compositionally biased region" description="Polar residues" evidence="7">
    <location>
        <begin position="119"/>
        <end position="134"/>
    </location>
</feature>
<feature type="modified residue" description="Methionine amide" evidence="4">
    <location>
        <position position="50"/>
    </location>
</feature>
<accession>P47851</accession>
<name>GRP_SHEEP</name>
<evidence type="ECO:0000250" key="1">
    <source>
        <dbReference type="UniProtKB" id="P07492"/>
    </source>
</evidence>
<evidence type="ECO:0000250" key="2">
    <source>
        <dbReference type="UniProtKB" id="P08989"/>
    </source>
</evidence>
<evidence type="ECO:0000250" key="3">
    <source>
        <dbReference type="UniProtKB" id="P24393"/>
    </source>
</evidence>
<evidence type="ECO:0000250" key="4">
    <source>
        <dbReference type="UniProtKB" id="P63153"/>
    </source>
</evidence>
<evidence type="ECO:0000250" key="5">
    <source>
        <dbReference type="UniProtKB" id="Q863C3"/>
    </source>
</evidence>
<evidence type="ECO:0000250" key="6">
    <source>
        <dbReference type="UniProtKB" id="Q8R1I2"/>
    </source>
</evidence>
<evidence type="ECO:0000256" key="7">
    <source>
        <dbReference type="SAM" id="MobiDB-lite"/>
    </source>
</evidence>
<evidence type="ECO:0000305" key="8"/>
<sequence length="134" mass="14855">MRSREVSLVLLALVLCPAPRGSAAPVTAGRAGALAKMYTRGNHWAVGHLMGKKSVAESPQLREEESLKEQLREYAQWEEATRNLLSLLQAKVAQGHQPPRWEPLSIHQPAWDSKDVSNFKDSGSQREGGNPQLY</sequence>
<reference key="1">
    <citation type="journal article" date="1994" name="Endocrinology">
        <title>Gastrin-releasing peptide is produced in the pregnant ovine uterus.</title>
        <authorList>
            <person name="Fraser M."/>
            <person name="McDonald T.J."/>
            <person name="Spindel E.R."/>
            <person name="Fahy M."/>
            <person name="Hill D."/>
            <person name="Challis J.R."/>
        </authorList>
    </citation>
    <scope>NUCLEOTIDE SEQUENCE [MRNA]</scope>
</reference>
<proteinExistence type="evidence at transcript level"/>
<organism>
    <name type="scientific">Ovis aries</name>
    <name type="common">Sheep</name>
    <dbReference type="NCBI Taxonomy" id="9940"/>
    <lineage>
        <taxon>Eukaryota</taxon>
        <taxon>Metazoa</taxon>
        <taxon>Chordata</taxon>
        <taxon>Craniata</taxon>
        <taxon>Vertebrata</taxon>
        <taxon>Euteleostomi</taxon>
        <taxon>Mammalia</taxon>
        <taxon>Eutheria</taxon>
        <taxon>Laurasiatheria</taxon>
        <taxon>Artiodactyla</taxon>
        <taxon>Ruminantia</taxon>
        <taxon>Pecora</taxon>
        <taxon>Bovidae</taxon>
        <taxon>Caprinae</taxon>
        <taxon>Ovis</taxon>
    </lineage>
</organism>
<protein>
    <recommendedName>
        <fullName>Gastrin-releasing peptide</fullName>
        <shortName>GRP</shortName>
    </recommendedName>
    <component>
        <recommendedName>
            <fullName>Neuromedin-C</fullName>
        </recommendedName>
        <alternativeName>
            <fullName>GRP-10</fullName>
        </alternativeName>
        <alternativeName>
            <fullName evidence="6">GRP18-27</fullName>
        </alternativeName>
    </component>
</protein>
<dbReference type="EMBL" id="S75723">
    <property type="protein sequence ID" value="AAB32675.1"/>
    <property type="molecule type" value="mRNA"/>
</dbReference>
<dbReference type="PIR" id="I47010">
    <property type="entry name" value="I47010"/>
</dbReference>
<dbReference type="RefSeq" id="NP_001009321.1">
    <property type="nucleotide sequence ID" value="NM_001009321.1"/>
</dbReference>
<dbReference type="STRING" id="9940.ENSOARP00000004291"/>
<dbReference type="PaxDb" id="9940-ENSOARP00000004291"/>
<dbReference type="GeneID" id="443332"/>
<dbReference type="KEGG" id="oas:443332"/>
<dbReference type="CTD" id="2922"/>
<dbReference type="eggNOG" id="ENOG502TKSH">
    <property type="taxonomic scope" value="Eukaryota"/>
</dbReference>
<dbReference type="OrthoDB" id="9879745at2759"/>
<dbReference type="Proteomes" id="UP000002356">
    <property type="component" value="Unplaced"/>
</dbReference>
<dbReference type="GO" id="GO:0005615">
    <property type="term" value="C:extracellular space"/>
    <property type="evidence" value="ECO:0000250"/>
    <property type="project" value="UniProtKB"/>
</dbReference>
<dbReference type="GO" id="GO:0043005">
    <property type="term" value="C:neuron projection"/>
    <property type="evidence" value="ECO:0000250"/>
    <property type="project" value="UniProtKB"/>
</dbReference>
<dbReference type="GO" id="GO:0034774">
    <property type="term" value="C:secretory granule lumen"/>
    <property type="evidence" value="ECO:0000250"/>
    <property type="project" value="UniProtKB"/>
</dbReference>
<dbReference type="GO" id="GO:0005184">
    <property type="term" value="F:neuropeptide hormone activity"/>
    <property type="evidence" value="ECO:0007669"/>
    <property type="project" value="TreeGrafter"/>
</dbReference>
<dbReference type="GO" id="GO:0043303">
    <property type="term" value="P:mast cell degranulation"/>
    <property type="evidence" value="ECO:0000250"/>
    <property type="project" value="UniProtKB"/>
</dbReference>
<dbReference type="GO" id="GO:1903817">
    <property type="term" value="P:negative regulation of voltage-gated potassium channel activity"/>
    <property type="evidence" value="ECO:0000250"/>
    <property type="project" value="UniProtKB"/>
</dbReference>
<dbReference type="GO" id="GO:1905151">
    <property type="term" value="P:negative regulation of voltage-gated sodium channel activity"/>
    <property type="evidence" value="ECO:0000250"/>
    <property type="project" value="UniProtKB"/>
</dbReference>
<dbReference type="GO" id="GO:0007218">
    <property type="term" value="P:neuropeptide signaling pathway"/>
    <property type="evidence" value="ECO:0007669"/>
    <property type="project" value="InterPro"/>
</dbReference>
<dbReference type="GO" id="GO:2000987">
    <property type="term" value="P:positive regulation of behavioral fear response"/>
    <property type="evidence" value="ECO:0000250"/>
    <property type="project" value="UniProtKB"/>
</dbReference>
<dbReference type="GO" id="GO:0090277">
    <property type="term" value="P:positive regulation of peptide hormone secretion"/>
    <property type="evidence" value="ECO:0000250"/>
    <property type="project" value="UniProtKB"/>
</dbReference>
<dbReference type="GO" id="GO:1900738">
    <property type="term" value="P:positive regulation of phospholipase C-activating G protein-coupled receptor signaling pathway"/>
    <property type="evidence" value="ECO:0000250"/>
    <property type="project" value="UniProtKB"/>
</dbReference>
<dbReference type="GO" id="GO:1903942">
    <property type="term" value="P:positive regulation of respiratory gaseous exchange"/>
    <property type="evidence" value="ECO:0000250"/>
    <property type="project" value="UniProtKB"/>
</dbReference>
<dbReference type="InterPro" id="IPR000874">
    <property type="entry name" value="Bombesin"/>
</dbReference>
<dbReference type="PANTHER" id="PTHR16866">
    <property type="entry name" value="GASTRIN-RELEASING PEPTIDE"/>
    <property type="match status" value="1"/>
</dbReference>
<dbReference type="PANTHER" id="PTHR16866:SF2">
    <property type="entry name" value="GASTRIN-RELEASING PEPTIDE"/>
    <property type="match status" value="1"/>
</dbReference>
<dbReference type="Pfam" id="PF02044">
    <property type="entry name" value="Bombesin"/>
    <property type="match status" value="1"/>
</dbReference>
<dbReference type="PROSITE" id="PS00257">
    <property type="entry name" value="BOMBESIN"/>
    <property type="match status" value="1"/>
</dbReference>
<keyword id="KW-0027">Amidation</keyword>
<keyword id="KW-0966">Cell projection</keyword>
<keyword id="KW-0165">Cleavage on pair of basic residues</keyword>
<keyword id="KW-0968">Cytoplasmic vesicle</keyword>
<keyword id="KW-0467">Mast cell degranulation</keyword>
<keyword id="KW-1185">Reference proteome</keyword>
<keyword id="KW-0964">Secreted</keyword>
<keyword id="KW-0732">Signal</keyword>
<comment type="function">
    <text evidence="3 4 6">Stimulates the release of gastrin and other gastrointestinal hormones (By similarity). Contributes to the perception of prurient stimuli and to the transmission of itch signals in the spinal cord that promote scratching behavior (By similarity). Contributes primarily to nonhistaminergic itch sensation (By similarity). In one study, shown to act in the amygdala as part of an inhibitory network which inhibits memory specifically related to learned fear (By similarity). In another study, shown to act on vasoactive intestinal peptide (VIP)-expressing cells in the auditory cortex, most likely via extrasynaptic diffusion from local and long-range sources, to mediate disinhibition of glutamatergic cells via VIP cell-specific GRPR signaling which leads to enhanced auditory fear memories (By similarity). Contributes to the regulation of food intake (By similarity). Inhibits voltage-gated sodium channels but enhances voltage-gated potassium channels in hippocampal neurons (By similarity). Induces sighing by acting directly on the pre-Botzinger complex, a cluster of several thousand neurons in the ventrolateral medulla responsible for inspiration during respiratory activity (By similarity).</text>
</comment>
<comment type="function">
    <molecule>Neuromedin-C</molecule>
    <text evidence="6">Induces an itch response through activation of receptors present on mast cells, triggering mast cell degranulation.</text>
</comment>
<comment type="subcellular location">
    <subcellularLocation>
        <location evidence="1">Secreted</location>
    </subcellularLocation>
    <subcellularLocation>
        <location evidence="5">Cytoplasmic vesicle</location>
        <location evidence="5">Secretory vesicle lumen</location>
    </subcellularLocation>
    <subcellularLocation>
        <location evidence="6">Cell projection</location>
        <location evidence="6">Neuron projection</location>
    </subcellularLocation>
    <text evidence="6">In neurons of the retrotrapezoid nucleus/parafacial respiratory group, expressed on neuron projections which project into the pre-Botzinger complex.</text>
</comment>
<comment type="similarity">
    <text evidence="8">Belongs to the bombesin/neuromedin-B/ranatensin family.</text>
</comment>